<comment type="function">
    <text evidence="1">Participates in the translocation of lipoproteins from the inner membrane to the outer membrane. Only forms a complex with a lipoprotein if the residue after the N-terminal Cys is not an aspartate (The Asp acts as a targeting signal to indicate that the lipoprotein should stay in the inner membrane).</text>
</comment>
<comment type="subunit">
    <text evidence="1">Monomer.</text>
</comment>
<comment type="subcellular location">
    <subcellularLocation>
        <location evidence="1">Periplasm</location>
    </subcellularLocation>
</comment>
<comment type="similarity">
    <text evidence="1">Belongs to the LolA family.</text>
</comment>
<gene>
    <name evidence="1" type="primary">lolA</name>
    <name type="ordered locus">Asuc_1101</name>
</gene>
<keyword id="KW-0143">Chaperone</keyword>
<keyword id="KW-0574">Periplasm</keyword>
<keyword id="KW-0653">Protein transport</keyword>
<keyword id="KW-1185">Reference proteome</keyword>
<keyword id="KW-0732">Signal</keyword>
<keyword id="KW-0813">Transport</keyword>
<reference key="1">
    <citation type="journal article" date="2010" name="BMC Genomics">
        <title>A genomic perspective on the potential of Actinobacillus succinogenes for industrial succinate production.</title>
        <authorList>
            <person name="McKinlay J.B."/>
            <person name="Laivenieks M."/>
            <person name="Schindler B.D."/>
            <person name="McKinlay A.A."/>
            <person name="Siddaramappa S."/>
            <person name="Challacombe J.F."/>
            <person name="Lowry S.R."/>
            <person name="Clum A."/>
            <person name="Lapidus A.L."/>
            <person name="Burkhart K.B."/>
            <person name="Harkins V."/>
            <person name="Vieille C."/>
        </authorList>
    </citation>
    <scope>NUCLEOTIDE SEQUENCE [LARGE SCALE GENOMIC DNA]</scope>
    <source>
        <strain>ATCC 55618 / DSM 22257 / CCUG 43843 / 130Z</strain>
    </source>
</reference>
<protein>
    <recommendedName>
        <fullName evidence="1">Outer-membrane lipoprotein carrier protein</fullName>
    </recommendedName>
</protein>
<name>LOLA_ACTSZ</name>
<sequence length="208" mass="23499">MKKTVKNLTALLTLALAAPWALADAASELQTRLRKVSVFSADFTQNVSSANGKQVQQGSGKIQIKRPNLFRMDNKKPQESQIIADGKTLWFYDPFVEQVTANWVSDAVNNTPFVLLTSNEQSHWNQYNVQQNADTFVLKPKAKNSNIKQFDIRIDGNGVLKGFSTIEKDGQSNLYMLRNINNNDIADNLFRFSVPKGAEFDDQRKKKK</sequence>
<accession>A6VNC0</accession>
<dbReference type="EMBL" id="CP000746">
    <property type="protein sequence ID" value="ABR74467.1"/>
    <property type="molecule type" value="Genomic_DNA"/>
</dbReference>
<dbReference type="RefSeq" id="WP_012072844.1">
    <property type="nucleotide sequence ID" value="NC_009655.1"/>
</dbReference>
<dbReference type="SMR" id="A6VNC0"/>
<dbReference type="STRING" id="339671.Asuc_1101"/>
<dbReference type="KEGG" id="asu:Asuc_1101"/>
<dbReference type="eggNOG" id="COG2834">
    <property type="taxonomic scope" value="Bacteria"/>
</dbReference>
<dbReference type="HOGENOM" id="CLU_087560_1_1_6"/>
<dbReference type="OrthoDB" id="9787361at2"/>
<dbReference type="Proteomes" id="UP000001114">
    <property type="component" value="Chromosome"/>
</dbReference>
<dbReference type="GO" id="GO:0030288">
    <property type="term" value="C:outer membrane-bounded periplasmic space"/>
    <property type="evidence" value="ECO:0007669"/>
    <property type="project" value="TreeGrafter"/>
</dbReference>
<dbReference type="GO" id="GO:0044874">
    <property type="term" value="P:lipoprotein localization to outer membrane"/>
    <property type="evidence" value="ECO:0007669"/>
    <property type="project" value="UniProtKB-UniRule"/>
</dbReference>
<dbReference type="GO" id="GO:0042953">
    <property type="term" value="P:lipoprotein transport"/>
    <property type="evidence" value="ECO:0007669"/>
    <property type="project" value="InterPro"/>
</dbReference>
<dbReference type="CDD" id="cd16325">
    <property type="entry name" value="LolA"/>
    <property type="match status" value="1"/>
</dbReference>
<dbReference type="Gene3D" id="2.50.20.10">
    <property type="entry name" value="Lipoprotein localisation LolA/LolB/LppX"/>
    <property type="match status" value="1"/>
</dbReference>
<dbReference type="HAMAP" id="MF_00240">
    <property type="entry name" value="LolA"/>
    <property type="match status" value="1"/>
</dbReference>
<dbReference type="InterPro" id="IPR029046">
    <property type="entry name" value="LolA/LolB/LppX"/>
</dbReference>
<dbReference type="InterPro" id="IPR004564">
    <property type="entry name" value="OM_lipoprot_carrier_LolA-like"/>
</dbReference>
<dbReference type="InterPro" id="IPR018323">
    <property type="entry name" value="OM_lipoprot_carrier_LolA_Pbac"/>
</dbReference>
<dbReference type="NCBIfam" id="TIGR00547">
    <property type="entry name" value="lolA"/>
    <property type="match status" value="1"/>
</dbReference>
<dbReference type="PANTHER" id="PTHR35869">
    <property type="entry name" value="OUTER-MEMBRANE LIPOPROTEIN CARRIER PROTEIN"/>
    <property type="match status" value="1"/>
</dbReference>
<dbReference type="PANTHER" id="PTHR35869:SF1">
    <property type="entry name" value="OUTER-MEMBRANE LIPOPROTEIN CARRIER PROTEIN"/>
    <property type="match status" value="1"/>
</dbReference>
<dbReference type="Pfam" id="PF03548">
    <property type="entry name" value="LolA"/>
    <property type="match status" value="1"/>
</dbReference>
<dbReference type="SUPFAM" id="SSF89392">
    <property type="entry name" value="Prokaryotic lipoproteins and lipoprotein localization factors"/>
    <property type="match status" value="1"/>
</dbReference>
<evidence type="ECO:0000255" key="1">
    <source>
        <dbReference type="HAMAP-Rule" id="MF_00240"/>
    </source>
</evidence>
<organism>
    <name type="scientific">Actinobacillus succinogenes (strain ATCC 55618 / DSM 22257 / CCUG 43843 / 130Z)</name>
    <dbReference type="NCBI Taxonomy" id="339671"/>
    <lineage>
        <taxon>Bacteria</taxon>
        <taxon>Pseudomonadati</taxon>
        <taxon>Pseudomonadota</taxon>
        <taxon>Gammaproteobacteria</taxon>
        <taxon>Pasteurellales</taxon>
        <taxon>Pasteurellaceae</taxon>
        <taxon>Actinobacillus</taxon>
    </lineage>
</organism>
<feature type="signal peptide" evidence="1">
    <location>
        <begin position="1"/>
        <end position="23"/>
    </location>
</feature>
<feature type="chain" id="PRO_0000336649" description="Outer-membrane lipoprotein carrier protein">
    <location>
        <begin position="24"/>
        <end position="208"/>
    </location>
</feature>
<proteinExistence type="inferred from homology"/>